<reference key="1">
    <citation type="journal article" date="2004" name="Nature">
        <title>Genome evolution in yeasts.</title>
        <authorList>
            <person name="Dujon B."/>
            <person name="Sherman D."/>
            <person name="Fischer G."/>
            <person name="Durrens P."/>
            <person name="Casaregola S."/>
            <person name="Lafontaine I."/>
            <person name="de Montigny J."/>
            <person name="Marck C."/>
            <person name="Neuveglise C."/>
            <person name="Talla E."/>
            <person name="Goffard N."/>
            <person name="Frangeul L."/>
            <person name="Aigle M."/>
            <person name="Anthouard V."/>
            <person name="Babour A."/>
            <person name="Barbe V."/>
            <person name="Barnay S."/>
            <person name="Blanchin S."/>
            <person name="Beckerich J.-M."/>
            <person name="Beyne E."/>
            <person name="Bleykasten C."/>
            <person name="Boisrame A."/>
            <person name="Boyer J."/>
            <person name="Cattolico L."/>
            <person name="Confanioleri F."/>
            <person name="de Daruvar A."/>
            <person name="Despons L."/>
            <person name="Fabre E."/>
            <person name="Fairhead C."/>
            <person name="Ferry-Dumazet H."/>
            <person name="Groppi A."/>
            <person name="Hantraye F."/>
            <person name="Hennequin C."/>
            <person name="Jauniaux N."/>
            <person name="Joyet P."/>
            <person name="Kachouri R."/>
            <person name="Kerrest A."/>
            <person name="Koszul R."/>
            <person name="Lemaire M."/>
            <person name="Lesur I."/>
            <person name="Ma L."/>
            <person name="Muller H."/>
            <person name="Nicaud J.-M."/>
            <person name="Nikolski M."/>
            <person name="Oztas S."/>
            <person name="Ozier-Kalogeropoulos O."/>
            <person name="Pellenz S."/>
            <person name="Potier S."/>
            <person name="Richard G.-F."/>
            <person name="Straub M.-L."/>
            <person name="Suleau A."/>
            <person name="Swennen D."/>
            <person name="Tekaia F."/>
            <person name="Wesolowski-Louvel M."/>
            <person name="Westhof E."/>
            <person name="Wirth B."/>
            <person name="Zeniou-Meyer M."/>
            <person name="Zivanovic Y."/>
            <person name="Bolotin-Fukuhara M."/>
            <person name="Thierry A."/>
            <person name="Bouchier C."/>
            <person name="Caudron B."/>
            <person name="Scarpelli C."/>
            <person name="Gaillardin C."/>
            <person name="Weissenbach J."/>
            <person name="Wincker P."/>
            <person name="Souciet J.-L."/>
        </authorList>
    </citation>
    <scope>NUCLEOTIDE SEQUENCE [LARGE SCALE GENOMIC DNA]</scope>
    <source>
        <strain>CLIB 122 / E 150</strain>
    </source>
</reference>
<gene>
    <name type="primary">STU1</name>
    <name type="ordered locus">YALI0D21912g</name>
</gene>
<sequence>MKSDQLGRVLSDDDLPTKLSIANEFKAFVKKNSVPRDLIHPYFLTLSRAIKSREDPQLTSVCFSCFCHLFKRVSIQDKQLLDDSATVAVVTDLLIDRLSDRSTGVRATANKVLLDYWVLVPQAVAVAMRQSAVVSSSHVTLGESLKWLQSVFDLSSAFNFSAFVQPVVDMLRYPQLQSSVCELLKKVYSVSDRRELEECLAATGVNEMLKKSILNGLPGGNSSSAVSDPKTTAPRSLSSQKSVASKPAQQPNSQEPGNENAPSSSLAFLNSLPNFRVDSLAPENVYSASDLESKINNMHVAFADKESEKNWSLREKHVTQIRKLLRGNALQDYPSQFAAAYKSVIDGVLKSATSLRTTLSNQGLLLVKESGQLGGNAFVDPVMDIVFPQIIRLTGQMKKITSNNAHITVCGLLTSATFSTKLINHVTSATVEKNAQPRTFAAVWLRILILSHSQTHKSAMQNHGGLDQIEKAIAKGLQDPTPSVKENMRVTYWSFAEYWPSEADKIYRKLDTKAKAMLDKVNPSGAKNAPIKKPAPRESLKEVMRRSRESSVNRDANAPSATAPPQRAKMGAPQRTSSGLVGRSLSGSNLTDRSNRLSSTSTSSRDQQRAVSDSTRPTQMTRPVSGRLSREPSLTRSSRDQSLTRSSRETVSREPSLTRGSRELPKQRVDQNRQRVPSISRDSRYGQRPVGSRESSRQSRESSLDPSRESSLAPSVHSSTAISRESSLPRDDLPSYDVEMDEDDPFVTQQLKLSLKQEDAMSQPEETMNEVTTAEATATTAPMKIPKSTPPRESTPPNSSPFVLAKSPATQGVSTSPATGKSASPPATAEDELSRDLNGESKHLKEVDDDNGSMDADERIESDVVMGDAEESAANFEPSEVEPAGVQLGLKSPKRETPTSALQGNEQAEPESHDAVADSQSHGADSADLQSEPRNVPVSPPTTSDASNVPILSPRPIHPAKFELDSDAMIVDEVAPEVNTVIDAQTQAEETPTEEIPAVVKVGFDAEAKSEPTEQTEAVKTSDTATEPGEPVDIPNSEQGPSTEPTELAKSAGSVEHVTEAIQEDPFGDALPAKQENGAKASDEIETDHTKSNNTESDGPVSAHDESEPMEICDSDNDAVDNGTNPDTKCQDQQDSTTPPMDFSSHDLKDELNTSSPESLTALLSNPDQYKEILDHVPAELFLLCVILFSESHVMDAQSVISRDTNLALSTASSMVMVCARDVYPSDSRWSQATVEELKHVTVTCLEWLTKLVNESSEASTLLATNKRYRTSLVHLLSTSVELHKQKFGDVTHNSLIHVIESMDKLSQRPPDKRTSRAFLEAPSPSPDSSLVEDVTDKLSHVTVKENFKTIRILPPQLASGQLIFPGSEVTWSKLELERLARSPSCSDSNEAILDAVSRDKVSVTQLSTLASRIPELEDVDLVTATILAYLHISHPPALTTAALVAIKQVLIKPELKLSMGHVTEIFSTLNHVNSHIDSRSPLAAAIEELVADLLTHTDSSEMLEFLLLSRSRDSKTQNKLLLLNTVYHVITPDLLPSYETQLLALITELISDPDPLVRRVTVGLVVRVLRVSPEMEGTISLAIKSKMDLVRYYMGA</sequence>
<organism>
    <name type="scientific">Yarrowia lipolytica (strain CLIB 122 / E 150)</name>
    <name type="common">Yeast</name>
    <name type="synonym">Candida lipolytica</name>
    <dbReference type="NCBI Taxonomy" id="284591"/>
    <lineage>
        <taxon>Eukaryota</taxon>
        <taxon>Fungi</taxon>
        <taxon>Dikarya</taxon>
        <taxon>Ascomycota</taxon>
        <taxon>Saccharomycotina</taxon>
        <taxon>Dipodascomycetes</taxon>
        <taxon>Dipodascales</taxon>
        <taxon>Dipodascales incertae sedis</taxon>
        <taxon>Yarrowia</taxon>
    </lineage>
</organism>
<evidence type="ECO:0000250" key="1"/>
<evidence type="ECO:0000256" key="2">
    <source>
        <dbReference type="SAM" id="MobiDB-lite"/>
    </source>
</evidence>
<evidence type="ECO:0000305" key="3"/>
<name>STU1_YARLI</name>
<proteinExistence type="inferred from homology"/>
<feature type="chain" id="PRO_0000272296" description="Protein STU1">
    <location>
        <begin position="1"/>
        <end position="1597"/>
    </location>
</feature>
<feature type="repeat" description="HEAT">
    <location>
        <begin position="1537"/>
        <end position="1573"/>
    </location>
</feature>
<feature type="region of interest" description="Disordered" evidence="2">
    <location>
        <begin position="220"/>
        <end position="265"/>
    </location>
</feature>
<feature type="region of interest" description="Disordered" evidence="2">
    <location>
        <begin position="519"/>
        <end position="958"/>
    </location>
</feature>
<feature type="region of interest" description="Disordered" evidence="2">
    <location>
        <begin position="1005"/>
        <end position="1154"/>
    </location>
</feature>
<feature type="region of interest" description="Disordered" evidence="2">
    <location>
        <begin position="1307"/>
        <end position="1332"/>
    </location>
</feature>
<feature type="compositionally biased region" description="Basic and acidic residues" evidence="2">
    <location>
        <begin position="535"/>
        <end position="552"/>
    </location>
</feature>
<feature type="compositionally biased region" description="Low complexity" evidence="2">
    <location>
        <begin position="577"/>
        <end position="605"/>
    </location>
</feature>
<feature type="compositionally biased region" description="Polar residues" evidence="2">
    <location>
        <begin position="610"/>
        <end position="622"/>
    </location>
</feature>
<feature type="compositionally biased region" description="Polar residues" evidence="2">
    <location>
        <begin position="632"/>
        <end position="645"/>
    </location>
</feature>
<feature type="compositionally biased region" description="Basic and acidic residues" evidence="2">
    <location>
        <begin position="660"/>
        <end position="673"/>
    </location>
</feature>
<feature type="compositionally biased region" description="Basic and acidic residues" evidence="2">
    <location>
        <begin position="694"/>
        <end position="708"/>
    </location>
</feature>
<feature type="compositionally biased region" description="Polar residues" evidence="2">
    <location>
        <begin position="709"/>
        <end position="726"/>
    </location>
</feature>
<feature type="compositionally biased region" description="Low complexity" evidence="2">
    <location>
        <begin position="765"/>
        <end position="781"/>
    </location>
</feature>
<feature type="compositionally biased region" description="Polar residues" evidence="2">
    <location>
        <begin position="791"/>
        <end position="801"/>
    </location>
</feature>
<feature type="compositionally biased region" description="Polar residues" evidence="2">
    <location>
        <begin position="808"/>
        <end position="822"/>
    </location>
</feature>
<feature type="compositionally biased region" description="Basic and acidic residues" evidence="2">
    <location>
        <begin position="832"/>
        <end position="846"/>
    </location>
</feature>
<feature type="compositionally biased region" description="Polar residues" evidence="2">
    <location>
        <begin position="918"/>
        <end position="933"/>
    </location>
</feature>
<feature type="compositionally biased region" description="Polar residues" evidence="2">
    <location>
        <begin position="1013"/>
        <end position="1025"/>
    </location>
</feature>
<feature type="compositionally biased region" description="Polar residues" evidence="2">
    <location>
        <begin position="1036"/>
        <end position="1045"/>
    </location>
</feature>
<feature type="compositionally biased region" description="Basic and acidic residues" evidence="2">
    <location>
        <begin position="1081"/>
        <end position="1091"/>
    </location>
</feature>
<feature type="compositionally biased region" description="Acidic residues" evidence="2">
    <location>
        <begin position="1108"/>
        <end position="1119"/>
    </location>
</feature>
<feature type="compositionally biased region" description="Polar residues" evidence="2">
    <location>
        <begin position="1122"/>
        <end position="1139"/>
    </location>
</feature>
<keyword id="KW-0131">Cell cycle</keyword>
<keyword id="KW-0132">Cell division</keyword>
<keyword id="KW-0175">Coiled coil</keyword>
<keyword id="KW-0963">Cytoplasm</keyword>
<keyword id="KW-0206">Cytoskeleton</keyword>
<keyword id="KW-0493">Microtubule</keyword>
<keyword id="KW-0498">Mitosis</keyword>
<keyword id="KW-0539">Nucleus</keyword>
<keyword id="KW-1185">Reference proteome</keyword>
<accession>Q6C882</accession>
<dbReference type="EMBL" id="CR382130">
    <property type="protein sequence ID" value="CAG81328.1"/>
    <property type="status" value="ALT_INIT"/>
    <property type="molecule type" value="Genomic_DNA"/>
</dbReference>
<dbReference type="RefSeq" id="XP_503130.1">
    <property type="nucleotide sequence ID" value="XM_503130.1"/>
</dbReference>
<dbReference type="STRING" id="284591.Q6C882"/>
<dbReference type="KEGG" id="yli:2910152"/>
<dbReference type="InParanoid" id="Q6C882"/>
<dbReference type="OrthoDB" id="114813at4891"/>
<dbReference type="Proteomes" id="UP000001300">
    <property type="component" value="Chromosome D"/>
</dbReference>
<dbReference type="GO" id="GO:0005881">
    <property type="term" value="C:cytoplasmic microtubule"/>
    <property type="evidence" value="ECO:0000318"/>
    <property type="project" value="GO_Central"/>
</dbReference>
<dbReference type="GO" id="GO:0005815">
    <property type="term" value="C:microtubule organizing center"/>
    <property type="evidence" value="ECO:0000318"/>
    <property type="project" value="GO_Central"/>
</dbReference>
<dbReference type="GO" id="GO:0072686">
    <property type="term" value="C:mitotic spindle"/>
    <property type="evidence" value="ECO:0000318"/>
    <property type="project" value="GO_Central"/>
</dbReference>
<dbReference type="GO" id="GO:1990023">
    <property type="term" value="C:mitotic spindle midzone"/>
    <property type="evidence" value="ECO:0000318"/>
    <property type="project" value="GO_Central"/>
</dbReference>
<dbReference type="GO" id="GO:0005634">
    <property type="term" value="C:nucleus"/>
    <property type="evidence" value="ECO:0007669"/>
    <property type="project" value="UniProtKB-SubCell"/>
</dbReference>
<dbReference type="GO" id="GO:0005876">
    <property type="term" value="C:spindle microtubule"/>
    <property type="evidence" value="ECO:0000318"/>
    <property type="project" value="GO_Central"/>
</dbReference>
<dbReference type="GO" id="GO:0008017">
    <property type="term" value="F:microtubule binding"/>
    <property type="evidence" value="ECO:0000318"/>
    <property type="project" value="GO_Central"/>
</dbReference>
<dbReference type="GO" id="GO:0060172">
    <property type="term" value="P:astral microtubule depolymerization"/>
    <property type="evidence" value="ECO:0000318"/>
    <property type="project" value="GO_Central"/>
</dbReference>
<dbReference type="GO" id="GO:0051301">
    <property type="term" value="P:cell division"/>
    <property type="evidence" value="ECO:0007669"/>
    <property type="project" value="UniProtKB-KW"/>
</dbReference>
<dbReference type="GO" id="GO:0090307">
    <property type="term" value="P:mitotic spindle assembly"/>
    <property type="evidence" value="ECO:0000318"/>
    <property type="project" value="GO_Central"/>
</dbReference>
<dbReference type="Gene3D" id="1.25.10.10">
    <property type="entry name" value="Leucine-rich Repeat Variant"/>
    <property type="match status" value="2"/>
</dbReference>
<dbReference type="InterPro" id="IPR011989">
    <property type="entry name" value="ARM-like"/>
</dbReference>
<dbReference type="InterPro" id="IPR016024">
    <property type="entry name" value="ARM-type_fold"/>
</dbReference>
<dbReference type="InterPro" id="IPR024395">
    <property type="entry name" value="CLASP_N_dom"/>
</dbReference>
<dbReference type="InterPro" id="IPR034085">
    <property type="entry name" value="TOG"/>
</dbReference>
<dbReference type="PANTHER" id="PTHR21567">
    <property type="entry name" value="CLASP"/>
    <property type="match status" value="1"/>
</dbReference>
<dbReference type="PANTHER" id="PTHR21567:SF9">
    <property type="entry name" value="CLIP-ASSOCIATING PROTEIN"/>
    <property type="match status" value="1"/>
</dbReference>
<dbReference type="Pfam" id="PF12348">
    <property type="entry name" value="CLASP_N"/>
    <property type="match status" value="1"/>
</dbReference>
<dbReference type="SMART" id="SM01349">
    <property type="entry name" value="TOG"/>
    <property type="match status" value="1"/>
</dbReference>
<dbReference type="SUPFAM" id="SSF48371">
    <property type="entry name" value="ARM repeat"/>
    <property type="match status" value="2"/>
</dbReference>
<comment type="function">
    <text evidence="1">Microtubule binding protein that promotes the stabilization of dynamic microtubules. Required for mitotic spindle formation (By similarity).</text>
</comment>
<comment type="subunit">
    <text evidence="1">Interacts with microtubules.</text>
</comment>
<comment type="subcellular location">
    <subcellularLocation>
        <location evidence="1">Cytoplasm</location>
        <location evidence="1">Cytoskeleton</location>
    </subcellularLocation>
    <subcellularLocation>
        <location evidence="1">Nucleus</location>
    </subcellularLocation>
    <subcellularLocation>
        <location evidence="1">Cytoplasm</location>
        <location evidence="1">Cytoskeleton</location>
        <location evidence="1">Spindle</location>
    </subcellularLocation>
</comment>
<comment type="similarity">
    <text evidence="3">Belongs to the CLASP family.</text>
</comment>
<comment type="sequence caution" evidence="3">
    <conflict type="erroneous initiation">
        <sequence resource="EMBL-CDS" id="CAG81328"/>
    </conflict>
</comment>
<protein>
    <recommendedName>
        <fullName>Protein STU1</fullName>
    </recommendedName>
</protein>